<sequence length="463" mass="47853">MPPPSLLLLHPRTPLPHHHRSSFRTSSPRPSRMVCAAAEGFISAAPILLPDGPWKQVEGGVTAAKGFKAAGIYGGLRAKGEKPDLALVACDVDATVAGAFTTNVVAAAPVLYCKRVLNSSKTARAVLINAGQANAATGDAGYQDTVDSADAVAKLLNVSTNDILIQSTGVIGQRIKKEALVNSLHRLVGSLSSSIEGANSAAVAITTTDLVSKSIAVQTEIGGVPIKIGGMAKGSGMIHPNMATMLGVLTTDAQVSSDVWREMVRTSVSRSFNQITVDGDTSTNDCVIALASGLSGLSSILTHDSTEAQQFQACLDAVMQGLAKSIAWDGEGATCLIEVTVAGANNEAEAAKIARSVASSSLVKAAVFGRDPNWGRIACSVGYSGIQFDADQLDISLGAIPLMKNGQPLPFDRSAASKYLKDAGDIHGTVNIDVSVGRGGGSGKAWGCDLSYKYVEINAEYTT</sequence>
<evidence type="ECO:0000255" key="1">
    <source>
        <dbReference type="HAMAP-Rule" id="MF_03124"/>
    </source>
</evidence>
<evidence type="ECO:0000303" key="2">
    <source>
    </source>
</evidence>
<evidence type="ECO:0000305" key="3"/>
<dbReference type="EC" id="2.3.1.35" evidence="1"/>
<dbReference type="EC" id="2.3.1.1" evidence="1"/>
<dbReference type="EMBL" id="DP000009">
    <property type="protein sequence ID" value="ABF95293.1"/>
    <property type="molecule type" value="Genomic_DNA"/>
</dbReference>
<dbReference type="EMBL" id="DP000009">
    <property type="protein sequence ID" value="ABF95294.1"/>
    <property type="molecule type" value="Genomic_DNA"/>
</dbReference>
<dbReference type="EMBL" id="AP008209">
    <property type="protein sequence ID" value="BAF11646.1"/>
    <property type="molecule type" value="Genomic_DNA"/>
</dbReference>
<dbReference type="EMBL" id="AP014959">
    <property type="protein sequence ID" value="BAS83553.1"/>
    <property type="molecule type" value="Genomic_DNA"/>
</dbReference>
<dbReference type="EMBL" id="AP014959">
    <property type="protein sequence ID" value="BAS83554.1"/>
    <property type="molecule type" value="Genomic_DNA"/>
</dbReference>
<dbReference type="EMBL" id="AK101851">
    <property type="status" value="NOT_ANNOTATED_CDS"/>
    <property type="molecule type" value="mRNA"/>
</dbReference>
<dbReference type="EMBL" id="AK106253">
    <property type="protein sequence ID" value="BAG97658.1"/>
    <property type="molecule type" value="mRNA"/>
</dbReference>
<dbReference type="RefSeq" id="XP_015630479.1">
    <property type="nucleotide sequence ID" value="XM_015774993.1"/>
</dbReference>
<dbReference type="SMR" id="Q10N79"/>
<dbReference type="FunCoup" id="Q10N79">
    <property type="interactions" value="1156"/>
</dbReference>
<dbReference type="STRING" id="39947.Q10N79"/>
<dbReference type="MEROPS" id="T05.002"/>
<dbReference type="PaxDb" id="39947-Q10N79"/>
<dbReference type="EnsemblPlants" id="Os03t0279400-02">
    <molecule id="Q10N79-1"/>
    <property type="protein sequence ID" value="Os03t0279400-02"/>
    <property type="gene ID" value="Os03g0279400"/>
</dbReference>
<dbReference type="Gramene" id="Os03t0279400-02">
    <molecule id="Q10N79-1"/>
    <property type="protein sequence ID" value="Os03t0279400-02"/>
    <property type="gene ID" value="Os03g0279400"/>
</dbReference>
<dbReference type="KEGG" id="dosa:Os03g0279400"/>
<dbReference type="eggNOG" id="KOG2786">
    <property type="taxonomic scope" value="Eukaryota"/>
</dbReference>
<dbReference type="HOGENOM" id="CLU_027172_1_1_1"/>
<dbReference type="InParanoid" id="Q10N79"/>
<dbReference type="OMA" id="WGRIVMA"/>
<dbReference type="OrthoDB" id="2017946at2759"/>
<dbReference type="PlantReactome" id="R-OSA-1119263">
    <property type="pathway name" value="Arginine biosynthesis"/>
</dbReference>
<dbReference type="PlantReactome" id="R-OSA-1119622">
    <property type="pathway name" value="Arginine biosynthesis II (acetyl cycle)"/>
</dbReference>
<dbReference type="UniPathway" id="UPA00068">
    <property type="reaction ID" value="UER00106"/>
</dbReference>
<dbReference type="UniPathway" id="UPA00068">
    <property type="reaction ID" value="UER00111"/>
</dbReference>
<dbReference type="Proteomes" id="UP000000763">
    <property type="component" value="Chromosome 3"/>
</dbReference>
<dbReference type="Proteomes" id="UP000059680">
    <property type="component" value="Chromosome 3"/>
</dbReference>
<dbReference type="GO" id="GO:0009507">
    <property type="term" value="C:chloroplast"/>
    <property type="evidence" value="ECO:0007669"/>
    <property type="project" value="UniProtKB-SubCell"/>
</dbReference>
<dbReference type="GO" id="GO:0004358">
    <property type="term" value="F:glutamate N-acetyltransferase activity"/>
    <property type="evidence" value="ECO:0007669"/>
    <property type="project" value="UniProtKB-UniRule"/>
</dbReference>
<dbReference type="GO" id="GO:0004042">
    <property type="term" value="F:L-glutamate N-acetyltransferase activity"/>
    <property type="evidence" value="ECO:0000318"/>
    <property type="project" value="GO_Central"/>
</dbReference>
<dbReference type="GO" id="GO:0006526">
    <property type="term" value="P:L-arginine biosynthetic process"/>
    <property type="evidence" value="ECO:0007669"/>
    <property type="project" value="UniProtKB-UniRule"/>
</dbReference>
<dbReference type="GO" id="GO:0006592">
    <property type="term" value="P:ornithine biosynthetic process"/>
    <property type="evidence" value="ECO:0000318"/>
    <property type="project" value="GO_Central"/>
</dbReference>
<dbReference type="CDD" id="cd02152">
    <property type="entry name" value="OAT"/>
    <property type="match status" value="1"/>
</dbReference>
<dbReference type="FunFam" id="3.10.20.340:FF:000001">
    <property type="entry name" value="Arginine biosynthesis bifunctional protein ArgJ, chloroplastic"/>
    <property type="match status" value="1"/>
</dbReference>
<dbReference type="FunFam" id="3.60.70.12:FF:000001">
    <property type="entry name" value="Arginine biosynthesis bifunctional protein ArgJ, chloroplastic"/>
    <property type="match status" value="1"/>
</dbReference>
<dbReference type="Gene3D" id="3.10.20.340">
    <property type="entry name" value="ArgJ beta chain, C-terminal domain"/>
    <property type="match status" value="1"/>
</dbReference>
<dbReference type="Gene3D" id="3.60.70.12">
    <property type="entry name" value="L-amino peptidase D-ALA esterase/amidase"/>
    <property type="match status" value="1"/>
</dbReference>
<dbReference type="HAMAP" id="MF_01106">
    <property type="entry name" value="ArgJ"/>
    <property type="match status" value="1"/>
</dbReference>
<dbReference type="InterPro" id="IPR002813">
    <property type="entry name" value="Arg_biosynth_ArgJ"/>
</dbReference>
<dbReference type="InterPro" id="IPR016117">
    <property type="entry name" value="ArgJ-like_dom_sf"/>
</dbReference>
<dbReference type="InterPro" id="IPR042195">
    <property type="entry name" value="ArgJ_beta_C"/>
</dbReference>
<dbReference type="NCBIfam" id="TIGR00120">
    <property type="entry name" value="ArgJ"/>
    <property type="match status" value="1"/>
</dbReference>
<dbReference type="NCBIfam" id="NF003802">
    <property type="entry name" value="PRK05388.1"/>
    <property type="match status" value="1"/>
</dbReference>
<dbReference type="PANTHER" id="PTHR23100">
    <property type="entry name" value="ARGININE BIOSYNTHESIS BIFUNCTIONAL PROTEIN ARGJ"/>
    <property type="match status" value="1"/>
</dbReference>
<dbReference type="PANTHER" id="PTHR23100:SF0">
    <property type="entry name" value="ARGININE BIOSYNTHESIS BIFUNCTIONAL PROTEIN ARGJ, MITOCHONDRIAL"/>
    <property type="match status" value="1"/>
</dbReference>
<dbReference type="Pfam" id="PF01960">
    <property type="entry name" value="ArgJ"/>
    <property type="match status" value="1"/>
</dbReference>
<dbReference type="SUPFAM" id="SSF56266">
    <property type="entry name" value="DmpA/ArgJ-like"/>
    <property type="match status" value="1"/>
</dbReference>
<gene>
    <name type="ordered locus">Os03g0279400</name>
    <name type="ordered locus">LOC_Os03g17120</name>
</gene>
<accession>Q10N79</accession>
<accession>A0A0N7KH15</accession>
<accession>Q10N78</accession>
<keyword id="KW-0012">Acyltransferase</keyword>
<keyword id="KW-0025">Alternative splicing</keyword>
<keyword id="KW-0028">Amino-acid biosynthesis</keyword>
<keyword id="KW-0055">Arginine biosynthesis</keyword>
<keyword id="KW-0068">Autocatalytic cleavage</keyword>
<keyword id="KW-0150">Chloroplast</keyword>
<keyword id="KW-0511">Multifunctional enzyme</keyword>
<keyword id="KW-0934">Plastid</keyword>
<keyword id="KW-1185">Reference proteome</keyword>
<keyword id="KW-0808">Transferase</keyword>
<name>ARGJ_ORYSJ</name>
<comment type="function">
    <text evidence="1">Catalyzes two activities which are involved in the cyclic version of arginine biosynthesis: the synthesis of acetylglutamate from glutamate and acetyl-CoA, and of ornithine by transacetylation between acetylornithine and glutamate.</text>
</comment>
<comment type="catalytic activity">
    <reaction evidence="1">
        <text>N(2)-acetyl-L-ornithine + L-glutamate = N-acetyl-L-glutamate + L-ornithine</text>
        <dbReference type="Rhea" id="RHEA:15349"/>
        <dbReference type="ChEBI" id="CHEBI:29985"/>
        <dbReference type="ChEBI" id="CHEBI:44337"/>
        <dbReference type="ChEBI" id="CHEBI:46911"/>
        <dbReference type="ChEBI" id="CHEBI:57805"/>
        <dbReference type="EC" id="2.3.1.35"/>
    </reaction>
</comment>
<comment type="catalytic activity">
    <reaction evidence="1">
        <text>L-glutamate + acetyl-CoA = N-acetyl-L-glutamate + CoA + H(+)</text>
        <dbReference type="Rhea" id="RHEA:24292"/>
        <dbReference type="ChEBI" id="CHEBI:15378"/>
        <dbReference type="ChEBI" id="CHEBI:29985"/>
        <dbReference type="ChEBI" id="CHEBI:44337"/>
        <dbReference type="ChEBI" id="CHEBI:57287"/>
        <dbReference type="ChEBI" id="CHEBI:57288"/>
        <dbReference type="EC" id="2.3.1.1"/>
    </reaction>
</comment>
<comment type="pathway">
    <text evidence="1">Amino-acid biosynthesis; L-arginine biosynthesis; L-ornithine and N-acetyl-L-glutamate from L-glutamate and N(2)-acetyl-L-ornithine (cyclic): step 1/1.</text>
</comment>
<comment type="pathway">
    <text evidence="1">Amino-acid biosynthesis; L-arginine biosynthesis; N(2)-acetyl-L-ornithine from L-glutamate: step 1/4.</text>
</comment>
<comment type="subunit">
    <text evidence="1">Heterodimer of an alpha and a beta chain.</text>
</comment>
<comment type="subcellular location">
    <subcellularLocation>
        <location evidence="1">Plastid</location>
        <location evidence="1">Chloroplast</location>
    </subcellularLocation>
</comment>
<comment type="alternative products">
    <event type="alternative splicing"/>
    <isoform>
        <id>Q10N79-1</id>
        <name>1</name>
        <sequence type="displayed"/>
    </isoform>
    <isoform>
        <id>Q10N79-2</id>
        <name>2</name>
        <sequence type="described" ref="VSP_039734 VSP_039735"/>
    </isoform>
</comment>
<comment type="miscellaneous">
    <text evidence="1">This protein may be expected to contain an N-terminal transit peptide but none has been predicted.</text>
</comment>
<comment type="similarity">
    <text evidence="1">Belongs to the ArgJ family.</text>
</comment>
<comment type="sequence caution" evidence="3">
    <conflict type="frameshift">
        <sequence resource="EMBL" id="AK101851"/>
    </conflict>
</comment>
<reference key="1">
    <citation type="journal article" date="2005" name="Genome Res.">
        <title>Sequence, annotation, and analysis of synteny between rice chromosome 3 and diverged grass species.</title>
        <authorList>
            <consortium name="The rice chromosome 3 sequencing consortium"/>
            <person name="Buell C.R."/>
            <person name="Yuan Q."/>
            <person name="Ouyang S."/>
            <person name="Liu J."/>
            <person name="Zhu W."/>
            <person name="Wang A."/>
            <person name="Maiti R."/>
            <person name="Haas B."/>
            <person name="Wortman J."/>
            <person name="Pertea M."/>
            <person name="Jones K.M."/>
            <person name="Kim M."/>
            <person name="Overton L."/>
            <person name="Tsitrin T."/>
            <person name="Fadrosh D."/>
            <person name="Bera J."/>
            <person name="Weaver B."/>
            <person name="Jin S."/>
            <person name="Johri S."/>
            <person name="Reardon M."/>
            <person name="Webb K."/>
            <person name="Hill J."/>
            <person name="Moffat K."/>
            <person name="Tallon L."/>
            <person name="Van Aken S."/>
            <person name="Lewis M."/>
            <person name="Utterback T."/>
            <person name="Feldblyum T."/>
            <person name="Zismann V."/>
            <person name="Iobst S."/>
            <person name="Hsiao J."/>
            <person name="de Vazeille A.R."/>
            <person name="Salzberg S.L."/>
            <person name="White O."/>
            <person name="Fraser C.M."/>
            <person name="Yu Y."/>
            <person name="Kim H."/>
            <person name="Rambo T."/>
            <person name="Currie J."/>
            <person name="Collura K."/>
            <person name="Kernodle-Thompson S."/>
            <person name="Wei F."/>
            <person name="Kudrna K."/>
            <person name="Ammiraju J.S.S."/>
            <person name="Luo M."/>
            <person name="Goicoechea J.L."/>
            <person name="Wing R.A."/>
            <person name="Henry D."/>
            <person name="Oates R."/>
            <person name="Palmer M."/>
            <person name="Pries G."/>
            <person name="Saski C."/>
            <person name="Simmons J."/>
            <person name="Soderlund C."/>
            <person name="Nelson W."/>
            <person name="de la Bastide M."/>
            <person name="Spiegel L."/>
            <person name="Nascimento L."/>
            <person name="Huang E."/>
            <person name="Preston R."/>
            <person name="Zutavern T."/>
            <person name="Palmer L."/>
            <person name="O'Shaughnessy A."/>
            <person name="Dike S."/>
            <person name="McCombie W.R."/>
            <person name="Minx P."/>
            <person name="Cordum H."/>
            <person name="Wilson R."/>
            <person name="Jin W."/>
            <person name="Lee H.R."/>
            <person name="Jiang J."/>
            <person name="Jackson S."/>
        </authorList>
    </citation>
    <scope>NUCLEOTIDE SEQUENCE [LARGE SCALE GENOMIC DNA]</scope>
    <source>
        <strain>cv. Nipponbare</strain>
    </source>
</reference>
<reference key="2">
    <citation type="journal article" date="2005" name="Nature">
        <title>The map-based sequence of the rice genome.</title>
        <authorList>
            <consortium name="International rice genome sequencing project (IRGSP)"/>
        </authorList>
    </citation>
    <scope>NUCLEOTIDE SEQUENCE [LARGE SCALE GENOMIC DNA]</scope>
    <source>
        <strain>cv. Nipponbare</strain>
    </source>
</reference>
<reference key="3">
    <citation type="journal article" date="2008" name="Nucleic Acids Res.">
        <title>The rice annotation project database (RAP-DB): 2008 update.</title>
        <authorList>
            <consortium name="The rice annotation project (RAP)"/>
        </authorList>
    </citation>
    <scope>GENOME REANNOTATION</scope>
    <source>
        <strain>cv. Nipponbare</strain>
    </source>
</reference>
<reference key="4">
    <citation type="journal article" date="2013" name="Rice">
        <title>Improvement of the Oryza sativa Nipponbare reference genome using next generation sequence and optical map data.</title>
        <authorList>
            <person name="Kawahara Y."/>
            <person name="de la Bastide M."/>
            <person name="Hamilton J.P."/>
            <person name="Kanamori H."/>
            <person name="McCombie W.R."/>
            <person name="Ouyang S."/>
            <person name="Schwartz D.C."/>
            <person name="Tanaka T."/>
            <person name="Wu J."/>
            <person name="Zhou S."/>
            <person name="Childs K.L."/>
            <person name="Davidson R.M."/>
            <person name="Lin H."/>
            <person name="Quesada-Ocampo L."/>
            <person name="Vaillancourt B."/>
            <person name="Sakai H."/>
            <person name="Lee S.S."/>
            <person name="Kim J."/>
            <person name="Numa H."/>
            <person name="Itoh T."/>
            <person name="Buell C.R."/>
            <person name="Matsumoto T."/>
        </authorList>
    </citation>
    <scope>GENOME REANNOTATION</scope>
    <source>
        <strain>cv. Nipponbare</strain>
    </source>
</reference>
<reference key="5">
    <citation type="journal article" date="2003" name="Science">
        <title>Collection, mapping, and annotation of over 28,000 cDNA clones from japonica rice.</title>
        <authorList>
            <consortium name="The rice full-length cDNA consortium"/>
        </authorList>
    </citation>
    <scope>NUCLEOTIDE SEQUENCE [LARGE SCALE MRNA] (ISOFORMS 1 AND 2)</scope>
    <source>
        <strain>cv. Nipponbare</strain>
    </source>
</reference>
<feature type="chain" id="PRO_0000397980" description="Arginine biosynthesis bifunctional protein ArgJ alpha chain" evidence="1">
    <location>
        <begin position="1"/>
        <end position="243"/>
    </location>
</feature>
<feature type="chain" id="PRO_0000397981" description="Arginine biosynthesis bifunctional protein ArgJ beta chain" evidence="1">
    <location>
        <begin position="244"/>
        <end position="463"/>
    </location>
</feature>
<feature type="active site" description="Nucleophile" evidence="1">
    <location>
        <position position="244"/>
    </location>
</feature>
<feature type="binding site" evidence="1">
    <location>
        <position position="207"/>
    </location>
    <ligand>
        <name>substrate</name>
    </ligand>
</feature>
<feature type="binding site" evidence="1">
    <location>
        <position position="233"/>
    </location>
    <ligand>
        <name>substrate</name>
    </ligand>
</feature>
<feature type="binding site" evidence="1">
    <location>
        <position position="244"/>
    </location>
    <ligand>
        <name>substrate</name>
    </ligand>
</feature>
<feature type="binding site" evidence="1">
    <location>
        <position position="331"/>
    </location>
    <ligand>
        <name>substrate</name>
    </ligand>
</feature>
<feature type="binding site" evidence="1">
    <location>
        <position position="458"/>
    </location>
    <ligand>
        <name>substrate</name>
    </ligand>
</feature>
<feature type="binding site" evidence="1">
    <location>
        <position position="463"/>
    </location>
    <ligand>
        <name>substrate</name>
    </ligand>
</feature>
<feature type="site" description="Involved in the stabilization of negative charge on the oxyanion by the formation of the oxyanion hole" evidence="1">
    <location>
        <position position="168"/>
    </location>
</feature>
<feature type="site" description="Involved in the stabilization of negative charge on the oxyanion by the formation of the oxyanion hole" evidence="1">
    <location>
        <position position="169"/>
    </location>
</feature>
<feature type="site" description="Cleavage; by autolysis" evidence="1">
    <location>
        <begin position="243"/>
        <end position="244"/>
    </location>
</feature>
<feature type="splice variant" id="VSP_039734" description="In isoform 2." evidence="2">
    <original>A</original>
    <variation>V</variation>
    <location>
        <position position="365"/>
    </location>
</feature>
<feature type="splice variant" id="VSP_039735" description="In isoform 2." evidence="2">
    <location>
        <begin position="366"/>
        <end position="463"/>
    </location>
</feature>
<proteinExistence type="evidence at transcript level"/>
<organism>
    <name type="scientific">Oryza sativa subsp. japonica</name>
    <name type="common">Rice</name>
    <dbReference type="NCBI Taxonomy" id="39947"/>
    <lineage>
        <taxon>Eukaryota</taxon>
        <taxon>Viridiplantae</taxon>
        <taxon>Streptophyta</taxon>
        <taxon>Embryophyta</taxon>
        <taxon>Tracheophyta</taxon>
        <taxon>Spermatophyta</taxon>
        <taxon>Magnoliopsida</taxon>
        <taxon>Liliopsida</taxon>
        <taxon>Poales</taxon>
        <taxon>Poaceae</taxon>
        <taxon>BOP clade</taxon>
        <taxon>Oryzoideae</taxon>
        <taxon>Oryzeae</taxon>
        <taxon>Oryzinae</taxon>
        <taxon>Oryza</taxon>
        <taxon>Oryza sativa</taxon>
    </lineage>
</organism>
<protein>
    <recommendedName>
        <fullName evidence="1">Arginine biosynthesis bifunctional protein ArgJ, chloroplastic</fullName>
    </recommendedName>
    <domain>
        <recommendedName>
            <fullName evidence="1">Glutamate N-acetyltransferase</fullName>
            <shortName evidence="1">GAT</shortName>
            <ecNumber evidence="1">2.3.1.35</ecNumber>
        </recommendedName>
        <alternativeName>
            <fullName evidence="1">Ornithine acetyltransferase</fullName>
            <shortName evidence="1">OATase</shortName>
        </alternativeName>
        <alternativeName>
            <fullName evidence="1">Ornithine transacetylase</fullName>
        </alternativeName>
    </domain>
    <domain>
        <recommendedName>
            <fullName evidence="1">Amino-acid acetyltransferase</fullName>
            <ecNumber evidence="1">2.3.1.1</ecNumber>
        </recommendedName>
        <alternativeName>
            <fullName evidence="1">N-acetylglutamate synthase</fullName>
            <shortName evidence="1">AGS</shortName>
        </alternativeName>
    </domain>
    <component>
        <recommendedName>
            <fullName evidence="1">Arginine biosynthesis bifunctional protein ArgJ alpha chain</fullName>
        </recommendedName>
    </component>
    <component>
        <recommendedName>
            <fullName evidence="1">Arginine biosynthesis bifunctional protein ArgJ beta chain</fullName>
        </recommendedName>
    </component>
</protein>